<evidence type="ECO:0000255" key="1">
    <source>
        <dbReference type="HAMAP-Rule" id="MF_00480"/>
    </source>
</evidence>
<evidence type="ECO:0000305" key="2"/>
<reference key="1">
    <citation type="journal article" date="2006" name="Appl. Environ. Microbiol.">
        <title>Complete genome sequence of the marine, chemolithoautotrophic, ammonia-oxidizing bacterium Nitrosococcus oceani ATCC 19707.</title>
        <authorList>
            <person name="Klotz M.G."/>
            <person name="Arp D.J."/>
            <person name="Chain P.S.G."/>
            <person name="El-Sheikh A.F."/>
            <person name="Hauser L.J."/>
            <person name="Hommes N.G."/>
            <person name="Larimer F.W."/>
            <person name="Malfatti S.A."/>
            <person name="Norton J.M."/>
            <person name="Poret-Peterson A.T."/>
            <person name="Vergez L.M."/>
            <person name="Ward B.B."/>
        </authorList>
    </citation>
    <scope>NUCLEOTIDE SEQUENCE [LARGE SCALE GENOMIC DNA]</scope>
    <source>
        <strain>ATCC 19707 / BCRC 17464 / JCM 30415 / NCIMB 11848 / C-107</strain>
    </source>
</reference>
<proteinExistence type="inferred from homology"/>
<name>RS7_NITOC</name>
<protein>
    <recommendedName>
        <fullName evidence="1">Small ribosomal subunit protein uS7</fullName>
    </recommendedName>
    <alternativeName>
        <fullName evidence="2">30S ribosomal protein S7</fullName>
    </alternativeName>
</protein>
<feature type="chain" id="PRO_0000226512" description="Small ribosomal subunit protein uS7">
    <location>
        <begin position="1"/>
        <end position="156"/>
    </location>
</feature>
<comment type="function">
    <text evidence="1">One of the primary rRNA binding proteins, it binds directly to 16S rRNA where it nucleates assembly of the head domain of the 30S subunit. Is located at the subunit interface close to the decoding center, probably blocks exit of the E-site tRNA.</text>
</comment>
<comment type="subunit">
    <text evidence="1">Part of the 30S ribosomal subunit. Contacts proteins S9 and S11.</text>
</comment>
<comment type="similarity">
    <text evidence="1">Belongs to the universal ribosomal protein uS7 family.</text>
</comment>
<sequence length="156" mass="17778">MPRKRVIARREVLPDPKYGSVQLAKFITILMLSGKKSLAERIIYGALGRVSEKANQDPMDVLEKALENVRPLVEVKSRRVGGATYQVPVEVRPERRSTLAMRWLVEAARKRSEKSMDLRLAGELLDAHEGKGTAVKKREDTHRMAEANKAFAHYRW</sequence>
<organism>
    <name type="scientific">Nitrosococcus oceani (strain ATCC 19707 / BCRC 17464 / JCM 30415 / NCIMB 11848 / C-107)</name>
    <dbReference type="NCBI Taxonomy" id="323261"/>
    <lineage>
        <taxon>Bacteria</taxon>
        <taxon>Pseudomonadati</taxon>
        <taxon>Pseudomonadota</taxon>
        <taxon>Gammaproteobacteria</taxon>
        <taxon>Chromatiales</taxon>
        <taxon>Chromatiaceae</taxon>
        <taxon>Nitrosococcus</taxon>
    </lineage>
</organism>
<dbReference type="EMBL" id="CP000127">
    <property type="protein sequence ID" value="ABA58786.1"/>
    <property type="molecule type" value="Genomic_DNA"/>
</dbReference>
<dbReference type="RefSeq" id="WP_011330930.1">
    <property type="nucleotide sequence ID" value="NC_007484.1"/>
</dbReference>
<dbReference type="SMR" id="Q3J8R0"/>
<dbReference type="FunCoup" id="Q3J8R0">
    <property type="interactions" value="677"/>
</dbReference>
<dbReference type="STRING" id="323261.Noc_2328"/>
<dbReference type="KEGG" id="noc:Noc_2328"/>
<dbReference type="eggNOG" id="COG0049">
    <property type="taxonomic scope" value="Bacteria"/>
</dbReference>
<dbReference type="HOGENOM" id="CLU_072226_1_1_6"/>
<dbReference type="InParanoid" id="Q3J8R0"/>
<dbReference type="Proteomes" id="UP000006838">
    <property type="component" value="Chromosome"/>
</dbReference>
<dbReference type="GO" id="GO:0015935">
    <property type="term" value="C:small ribosomal subunit"/>
    <property type="evidence" value="ECO:0007669"/>
    <property type="project" value="InterPro"/>
</dbReference>
<dbReference type="GO" id="GO:0019843">
    <property type="term" value="F:rRNA binding"/>
    <property type="evidence" value="ECO:0007669"/>
    <property type="project" value="UniProtKB-UniRule"/>
</dbReference>
<dbReference type="GO" id="GO:0003735">
    <property type="term" value="F:structural constituent of ribosome"/>
    <property type="evidence" value="ECO:0007669"/>
    <property type="project" value="InterPro"/>
</dbReference>
<dbReference type="GO" id="GO:0000049">
    <property type="term" value="F:tRNA binding"/>
    <property type="evidence" value="ECO:0007669"/>
    <property type="project" value="UniProtKB-UniRule"/>
</dbReference>
<dbReference type="GO" id="GO:0006412">
    <property type="term" value="P:translation"/>
    <property type="evidence" value="ECO:0007669"/>
    <property type="project" value="UniProtKB-UniRule"/>
</dbReference>
<dbReference type="CDD" id="cd14869">
    <property type="entry name" value="uS7_Bacteria"/>
    <property type="match status" value="1"/>
</dbReference>
<dbReference type="FunFam" id="1.10.455.10:FF:000001">
    <property type="entry name" value="30S ribosomal protein S7"/>
    <property type="match status" value="1"/>
</dbReference>
<dbReference type="Gene3D" id="1.10.455.10">
    <property type="entry name" value="Ribosomal protein S7 domain"/>
    <property type="match status" value="1"/>
</dbReference>
<dbReference type="HAMAP" id="MF_00480_B">
    <property type="entry name" value="Ribosomal_uS7_B"/>
    <property type="match status" value="1"/>
</dbReference>
<dbReference type="InterPro" id="IPR000235">
    <property type="entry name" value="Ribosomal_uS7"/>
</dbReference>
<dbReference type="InterPro" id="IPR005717">
    <property type="entry name" value="Ribosomal_uS7_bac/org-type"/>
</dbReference>
<dbReference type="InterPro" id="IPR023798">
    <property type="entry name" value="Ribosomal_uS7_dom"/>
</dbReference>
<dbReference type="InterPro" id="IPR036823">
    <property type="entry name" value="Ribosomal_uS7_dom_sf"/>
</dbReference>
<dbReference type="NCBIfam" id="TIGR01029">
    <property type="entry name" value="rpsG_bact"/>
    <property type="match status" value="1"/>
</dbReference>
<dbReference type="PANTHER" id="PTHR11205">
    <property type="entry name" value="RIBOSOMAL PROTEIN S7"/>
    <property type="match status" value="1"/>
</dbReference>
<dbReference type="Pfam" id="PF00177">
    <property type="entry name" value="Ribosomal_S7"/>
    <property type="match status" value="1"/>
</dbReference>
<dbReference type="PIRSF" id="PIRSF002122">
    <property type="entry name" value="RPS7p_RPS7a_RPS5e_RPS7o"/>
    <property type="match status" value="1"/>
</dbReference>
<dbReference type="SUPFAM" id="SSF47973">
    <property type="entry name" value="Ribosomal protein S7"/>
    <property type="match status" value="1"/>
</dbReference>
<accession>Q3J8R0</accession>
<keyword id="KW-1185">Reference proteome</keyword>
<keyword id="KW-0687">Ribonucleoprotein</keyword>
<keyword id="KW-0689">Ribosomal protein</keyword>
<keyword id="KW-0694">RNA-binding</keyword>
<keyword id="KW-0699">rRNA-binding</keyword>
<keyword id="KW-0820">tRNA-binding</keyword>
<gene>
    <name evidence="1" type="primary">rpsG</name>
    <name type="ordered locus">Noc_2328</name>
</gene>